<evidence type="ECO:0000255" key="1">
    <source>
        <dbReference type="HAMAP-Rule" id="MF_00736"/>
    </source>
</evidence>
<evidence type="ECO:0000305" key="2"/>
<gene>
    <name evidence="1" type="primary">rplK</name>
    <name type="ordered locus">Dshi_0260</name>
</gene>
<name>RL11_DINSH</name>
<feature type="chain" id="PRO_1000083380" description="Large ribosomal subunit protein uL11">
    <location>
        <begin position="1"/>
        <end position="141"/>
    </location>
</feature>
<sequence>MAKKLAGTMKLQVPAGQANPSPPVGPALGQRGINIMEFCKAFNAKTQDMEPGAPCPTVITYYQDKSFTMEIKTPPAAYYLKKAAKVKSGASTPSRQTVGTVTVAQVREIAEAKMRDLNANDIEGAMKIVLGSARSMGIEVK</sequence>
<dbReference type="EMBL" id="CP000830">
    <property type="protein sequence ID" value="ABV92009.1"/>
    <property type="molecule type" value="Genomic_DNA"/>
</dbReference>
<dbReference type="RefSeq" id="WP_012176942.1">
    <property type="nucleotide sequence ID" value="NC_009952.1"/>
</dbReference>
<dbReference type="SMR" id="A8LLJ9"/>
<dbReference type="STRING" id="398580.Dshi_0260"/>
<dbReference type="KEGG" id="dsh:Dshi_0260"/>
<dbReference type="eggNOG" id="COG0080">
    <property type="taxonomic scope" value="Bacteria"/>
</dbReference>
<dbReference type="HOGENOM" id="CLU_074237_2_0_5"/>
<dbReference type="OrthoDB" id="9802408at2"/>
<dbReference type="Proteomes" id="UP000006833">
    <property type="component" value="Chromosome"/>
</dbReference>
<dbReference type="GO" id="GO:0022625">
    <property type="term" value="C:cytosolic large ribosomal subunit"/>
    <property type="evidence" value="ECO:0007669"/>
    <property type="project" value="TreeGrafter"/>
</dbReference>
<dbReference type="GO" id="GO:0070180">
    <property type="term" value="F:large ribosomal subunit rRNA binding"/>
    <property type="evidence" value="ECO:0007669"/>
    <property type="project" value="UniProtKB-UniRule"/>
</dbReference>
<dbReference type="GO" id="GO:0003735">
    <property type="term" value="F:structural constituent of ribosome"/>
    <property type="evidence" value="ECO:0007669"/>
    <property type="project" value="InterPro"/>
</dbReference>
<dbReference type="GO" id="GO:0006412">
    <property type="term" value="P:translation"/>
    <property type="evidence" value="ECO:0007669"/>
    <property type="project" value="UniProtKB-UniRule"/>
</dbReference>
<dbReference type="CDD" id="cd00349">
    <property type="entry name" value="Ribosomal_L11"/>
    <property type="match status" value="1"/>
</dbReference>
<dbReference type="FunFam" id="1.10.10.250:FF:000001">
    <property type="entry name" value="50S ribosomal protein L11"/>
    <property type="match status" value="1"/>
</dbReference>
<dbReference type="FunFam" id="3.30.1550.10:FF:000001">
    <property type="entry name" value="50S ribosomal protein L11"/>
    <property type="match status" value="1"/>
</dbReference>
<dbReference type="Gene3D" id="1.10.10.250">
    <property type="entry name" value="Ribosomal protein L11, C-terminal domain"/>
    <property type="match status" value="1"/>
</dbReference>
<dbReference type="Gene3D" id="3.30.1550.10">
    <property type="entry name" value="Ribosomal protein L11/L12, N-terminal domain"/>
    <property type="match status" value="1"/>
</dbReference>
<dbReference type="HAMAP" id="MF_00736">
    <property type="entry name" value="Ribosomal_uL11"/>
    <property type="match status" value="1"/>
</dbReference>
<dbReference type="InterPro" id="IPR000911">
    <property type="entry name" value="Ribosomal_uL11"/>
</dbReference>
<dbReference type="InterPro" id="IPR006519">
    <property type="entry name" value="Ribosomal_uL11_bac-typ"/>
</dbReference>
<dbReference type="InterPro" id="IPR020783">
    <property type="entry name" value="Ribosomal_uL11_C"/>
</dbReference>
<dbReference type="InterPro" id="IPR036769">
    <property type="entry name" value="Ribosomal_uL11_C_sf"/>
</dbReference>
<dbReference type="InterPro" id="IPR020784">
    <property type="entry name" value="Ribosomal_uL11_N"/>
</dbReference>
<dbReference type="InterPro" id="IPR036796">
    <property type="entry name" value="Ribosomal_uL11_N_sf"/>
</dbReference>
<dbReference type="NCBIfam" id="TIGR01632">
    <property type="entry name" value="L11_bact"/>
    <property type="match status" value="1"/>
</dbReference>
<dbReference type="PANTHER" id="PTHR11661">
    <property type="entry name" value="60S RIBOSOMAL PROTEIN L12"/>
    <property type="match status" value="1"/>
</dbReference>
<dbReference type="PANTHER" id="PTHR11661:SF1">
    <property type="entry name" value="LARGE RIBOSOMAL SUBUNIT PROTEIN UL11M"/>
    <property type="match status" value="1"/>
</dbReference>
<dbReference type="Pfam" id="PF00298">
    <property type="entry name" value="Ribosomal_L11"/>
    <property type="match status" value="1"/>
</dbReference>
<dbReference type="Pfam" id="PF03946">
    <property type="entry name" value="Ribosomal_L11_N"/>
    <property type="match status" value="1"/>
</dbReference>
<dbReference type="SMART" id="SM00649">
    <property type="entry name" value="RL11"/>
    <property type="match status" value="1"/>
</dbReference>
<dbReference type="SUPFAM" id="SSF54747">
    <property type="entry name" value="Ribosomal L11/L12e N-terminal domain"/>
    <property type="match status" value="1"/>
</dbReference>
<dbReference type="SUPFAM" id="SSF46906">
    <property type="entry name" value="Ribosomal protein L11, C-terminal domain"/>
    <property type="match status" value="1"/>
</dbReference>
<comment type="function">
    <text evidence="1">Forms part of the ribosomal stalk which helps the ribosome interact with GTP-bound translation factors.</text>
</comment>
<comment type="subunit">
    <text evidence="1">Part of the ribosomal stalk of the 50S ribosomal subunit. Interacts with L10 and the large rRNA to form the base of the stalk. L10 forms an elongated spine to which L12 dimers bind in a sequential fashion forming a multimeric L10(L12)X complex.</text>
</comment>
<comment type="PTM">
    <text evidence="1">One or more lysine residues are methylated.</text>
</comment>
<comment type="similarity">
    <text evidence="1">Belongs to the universal ribosomal protein uL11 family.</text>
</comment>
<proteinExistence type="inferred from homology"/>
<reference key="1">
    <citation type="journal article" date="2010" name="ISME J.">
        <title>The complete genome sequence of the algal symbiont Dinoroseobacter shibae: a hitchhiker's guide to life in the sea.</title>
        <authorList>
            <person name="Wagner-Dobler I."/>
            <person name="Ballhausen B."/>
            <person name="Berger M."/>
            <person name="Brinkhoff T."/>
            <person name="Buchholz I."/>
            <person name="Bunk B."/>
            <person name="Cypionka H."/>
            <person name="Daniel R."/>
            <person name="Drepper T."/>
            <person name="Gerdts G."/>
            <person name="Hahnke S."/>
            <person name="Han C."/>
            <person name="Jahn D."/>
            <person name="Kalhoefer D."/>
            <person name="Kiss H."/>
            <person name="Klenk H.P."/>
            <person name="Kyrpides N."/>
            <person name="Liebl W."/>
            <person name="Liesegang H."/>
            <person name="Meincke L."/>
            <person name="Pati A."/>
            <person name="Petersen J."/>
            <person name="Piekarski T."/>
            <person name="Pommerenke C."/>
            <person name="Pradella S."/>
            <person name="Pukall R."/>
            <person name="Rabus R."/>
            <person name="Stackebrandt E."/>
            <person name="Thole S."/>
            <person name="Thompson L."/>
            <person name="Tielen P."/>
            <person name="Tomasch J."/>
            <person name="von Jan M."/>
            <person name="Wanphrut N."/>
            <person name="Wichels A."/>
            <person name="Zech H."/>
            <person name="Simon M."/>
        </authorList>
    </citation>
    <scope>NUCLEOTIDE SEQUENCE [LARGE SCALE GENOMIC DNA]</scope>
    <source>
        <strain>DSM 16493 / NCIMB 14021 / DFL 12</strain>
    </source>
</reference>
<keyword id="KW-0488">Methylation</keyword>
<keyword id="KW-1185">Reference proteome</keyword>
<keyword id="KW-0687">Ribonucleoprotein</keyword>
<keyword id="KW-0689">Ribosomal protein</keyword>
<keyword id="KW-0694">RNA-binding</keyword>
<keyword id="KW-0699">rRNA-binding</keyword>
<protein>
    <recommendedName>
        <fullName evidence="1">Large ribosomal subunit protein uL11</fullName>
    </recommendedName>
    <alternativeName>
        <fullName evidence="2">50S ribosomal protein L11</fullName>
    </alternativeName>
</protein>
<accession>A8LLJ9</accession>
<organism>
    <name type="scientific">Dinoroseobacter shibae (strain DSM 16493 / NCIMB 14021 / DFL 12)</name>
    <dbReference type="NCBI Taxonomy" id="398580"/>
    <lineage>
        <taxon>Bacteria</taxon>
        <taxon>Pseudomonadati</taxon>
        <taxon>Pseudomonadota</taxon>
        <taxon>Alphaproteobacteria</taxon>
        <taxon>Rhodobacterales</taxon>
        <taxon>Roseobacteraceae</taxon>
        <taxon>Dinoroseobacter</taxon>
    </lineage>
</organism>